<keyword id="KW-0963">Cytoplasm</keyword>
<keyword id="KW-0396">Initiation factor</keyword>
<keyword id="KW-0648">Protein biosynthesis</keyword>
<keyword id="KW-1185">Reference proteome</keyword>
<comment type="function">
    <text evidence="1">Component of the eukaryotic translation initiation factor 3 (eIF-3) complex, which is involved in protein synthesis of a specialized repertoire of mRNAs and, together with other initiation factors, stimulates binding of mRNA and methionyl-tRNAi to the 40S ribosome. The eIF-3 complex specifically targets and initiates translation of a subset of mRNAs involved in cell proliferation.</text>
</comment>
<comment type="subunit">
    <text evidence="1">Component of the eukaryotic translation initiation factor 3 (eIF-3) complex.</text>
</comment>
<comment type="subcellular location">
    <subcellularLocation>
        <location evidence="1">Cytoplasm</location>
    </subcellularLocation>
</comment>
<comment type="similarity">
    <text evidence="1">Belongs to the eIF-3 subunit K family.</text>
</comment>
<organism>
    <name type="scientific">Sclerotinia sclerotiorum (strain ATCC 18683 / 1980 / Ss-1)</name>
    <name type="common">White mold</name>
    <name type="synonym">Whetzelinia sclerotiorum</name>
    <dbReference type="NCBI Taxonomy" id="665079"/>
    <lineage>
        <taxon>Eukaryota</taxon>
        <taxon>Fungi</taxon>
        <taxon>Dikarya</taxon>
        <taxon>Ascomycota</taxon>
        <taxon>Pezizomycotina</taxon>
        <taxon>Leotiomycetes</taxon>
        <taxon>Helotiales</taxon>
        <taxon>Sclerotiniaceae</taxon>
        <taxon>Sclerotinia</taxon>
    </lineage>
</organism>
<accession>A7F080</accession>
<dbReference type="EMBL" id="CH476637">
    <property type="protein sequence ID" value="EDN95122.1"/>
    <property type="molecule type" value="Genomic_DNA"/>
</dbReference>
<dbReference type="RefSeq" id="XP_001587757.1">
    <property type="nucleotide sequence ID" value="XM_001587707.1"/>
</dbReference>
<dbReference type="SMR" id="A7F080"/>
<dbReference type="STRING" id="665079.A7F080"/>
<dbReference type="EnsemblFungi" id="EDN95122">
    <property type="protein sequence ID" value="EDN95122"/>
    <property type="gene ID" value="SS1G_10997"/>
</dbReference>
<dbReference type="GeneID" id="5483967"/>
<dbReference type="KEGG" id="ssl:SS1G_10997"/>
<dbReference type="VEuPathDB" id="FungiDB:sscle_12g089240"/>
<dbReference type="eggNOG" id="KOG3252">
    <property type="taxonomic scope" value="Eukaryota"/>
</dbReference>
<dbReference type="HOGENOM" id="CLU_076723_0_1_1"/>
<dbReference type="InParanoid" id="A7F080"/>
<dbReference type="OMA" id="GDDLCAD"/>
<dbReference type="OrthoDB" id="337745at2759"/>
<dbReference type="Proteomes" id="UP000001312">
    <property type="component" value="Unassembled WGS sequence"/>
</dbReference>
<dbReference type="GO" id="GO:0016282">
    <property type="term" value="C:eukaryotic 43S preinitiation complex"/>
    <property type="evidence" value="ECO:0007669"/>
    <property type="project" value="UniProtKB-UniRule"/>
</dbReference>
<dbReference type="GO" id="GO:0033290">
    <property type="term" value="C:eukaryotic 48S preinitiation complex"/>
    <property type="evidence" value="ECO:0007669"/>
    <property type="project" value="UniProtKB-UniRule"/>
</dbReference>
<dbReference type="GO" id="GO:0005852">
    <property type="term" value="C:eukaryotic translation initiation factor 3 complex"/>
    <property type="evidence" value="ECO:0000318"/>
    <property type="project" value="GO_Central"/>
</dbReference>
<dbReference type="GO" id="GO:0043022">
    <property type="term" value="F:ribosome binding"/>
    <property type="evidence" value="ECO:0007669"/>
    <property type="project" value="InterPro"/>
</dbReference>
<dbReference type="GO" id="GO:0003723">
    <property type="term" value="F:RNA binding"/>
    <property type="evidence" value="ECO:0007669"/>
    <property type="project" value="UniProtKB-UniRule"/>
</dbReference>
<dbReference type="GO" id="GO:0003743">
    <property type="term" value="F:translation initiation factor activity"/>
    <property type="evidence" value="ECO:0007669"/>
    <property type="project" value="UniProtKB-UniRule"/>
</dbReference>
<dbReference type="GO" id="GO:0001732">
    <property type="term" value="P:formation of cytoplasmic translation initiation complex"/>
    <property type="evidence" value="ECO:0007669"/>
    <property type="project" value="UniProtKB-UniRule"/>
</dbReference>
<dbReference type="GO" id="GO:0006446">
    <property type="term" value="P:regulation of translational initiation"/>
    <property type="evidence" value="ECO:0007669"/>
    <property type="project" value="InterPro"/>
</dbReference>
<dbReference type="FunFam" id="1.10.10.10:FF:000389">
    <property type="entry name" value="Eukaryotic translation initiation factor 3 subunit K"/>
    <property type="match status" value="1"/>
</dbReference>
<dbReference type="FunFam" id="1.25.40.250:FF:000003">
    <property type="entry name" value="Eukaryotic translation initiation factor 3 subunit K"/>
    <property type="match status" value="1"/>
</dbReference>
<dbReference type="Gene3D" id="1.25.40.250">
    <property type="entry name" value="ARM repeat, domain 1"/>
    <property type="match status" value="1"/>
</dbReference>
<dbReference type="Gene3D" id="1.10.10.10">
    <property type="entry name" value="Winged helix-like DNA-binding domain superfamily/Winged helix DNA-binding domain"/>
    <property type="match status" value="1"/>
</dbReference>
<dbReference type="HAMAP" id="MF_03010">
    <property type="entry name" value="eIF3k"/>
    <property type="match status" value="1"/>
</dbReference>
<dbReference type="InterPro" id="IPR016024">
    <property type="entry name" value="ARM-type_fold"/>
</dbReference>
<dbReference type="InterPro" id="IPR033464">
    <property type="entry name" value="CSN8_PSD8_EIF3K"/>
</dbReference>
<dbReference type="InterPro" id="IPR009374">
    <property type="entry name" value="eIF3k"/>
</dbReference>
<dbReference type="InterPro" id="IPR000717">
    <property type="entry name" value="PCI_dom"/>
</dbReference>
<dbReference type="InterPro" id="IPR016020">
    <property type="entry name" value="Transl_init_fac_sub12_N_euk"/>
</dbReference>
<dbReference type="InterPro" id="IPR036388">
    <property type="entry name" value="WH-like_DNA-bd_sf"/>
</dbReference>
<dbReference type="InterPro" id="IPR036390">
    <property type="entry name" value="WH_DNA-bd_sf"/>
</dbReference>
<dbReference type="PANTHER" id="PTHR13022">
    <property type="entry name" value="EUKARYOTIC TRANSLATION INITIATION FACTOR 3 SUBUNIT 11"/>
    <property type="match status" value="1"/>
</dbReference>
<dbReference type="PANTHER" id="PTHR13022:SF0">
    <property type="entry name" value="EUKARYOTIC TRANSLATION INITIATION FACTOR 3 SUBUNIT K"/>
    <property type="match status" value="1"/>
</dbReference>
<dbReference type="Pfam" id="PF10075">
    <property type="entry name" value="CSN8_PSD8_EIF3K"/>
    <property type="match status" value="1"/>
</dbReference>
<dbReference type="SUPFAM" id="SSF48371">
    <property type="entry name" value="ARM repeat"/>
    <property type="match status" value="1"/>
</dbReference>
<dbReference type="SUPFAM" id="SSF46785">
    <property type="entry name" value="Winged helix' DNA-binding domain"/>
    <property type="match status" value="1"/>
</dbReference>
<dbReference type="PROSITE" id="PS50250">
    <property type="entry name" value="PCI"/>
    <property type="match status" value="1"/>
</dbReference>
<proteinExistence type="inferred from homology"/>
<gene>
    <name type="ORF">SS1G_10997</name>
</gene>
<reference key="1">
    <citation type="journal article" date="2011" name="PLoS Genet.">
        <title>Genomic analysis of the necrotrophic fungal pathogens Sclerotinia sclerotiorum and Botrytis cinerea.</title>
        <authorList>
            <person name="Amselem J."/>
            <person name="Cuomo C.A."/>
            <person name="van Kan J.A.L."/>
            <person name="Viaud M."/>
            <person name="Benito E.P."/>
            <person name="Couloux A."/>
            <person name="Coutinho P.M."/>
            <person name="de Vries R.P."/>
            <person name="Dyer P.S."/>
            <person name="Fillinger S."/>
            <person name="Fournier E."/>
            <person name="Gout L."/>
            <person name="Hahn M."/>
            <person name="Kohn L."/>
            <person name="Lapalu N."/>
            <person name="Plummer K.M."/>
            <person name="Pradier J.-M."/>
            <person name="Quevillon E."/>
            <person name="Sharon A."/>
            <person name="Simon A."/>
            <person name="ten Have A."/>
            <person name="Tudzynski B."/>
            <person name="Tudzynski P."/>
            <person name="Wincker P."/>
            <person name="Andrew M."/>
            <person name="Anthouard V."/>
            <person name="Beever R.E."/>
            <person name="Beffa R."/>
            <person name="Benoit I."/>
            <person name="Bouzid O."/>
            <person name="Brault B."/>
            <person name="Chen Z."/>
            <person name="Choquer M."/>
            <person name="Collemare J."/>
            <person name="Cotton P."/>
            <person name="Danchin E.G."/>
            <person name="Da Silva C."/>
            <person name="Gautier A."/>
            <person name="Giraud C."/>
            <person name="Giraud T."/>
            <person name="Gonzalez C."/>
            <person name="Grossetete S."/>
            <person name="Gueldener U."/>
            <person name="Henrissat B."/>
            <person name="Howlett B.J."/>
            <person name="Kodira C."/>
            <person name="Kretschmer M."/>
            <person name="Lappartient A."/>
            <person name="Leroch M."/>
            <person name="Levis C."/>
            <person name="Mauceli E."/>
            <person name="Neuveglise C."/>
            <person name="Oeser B."/>
            <person name="Pearson M."/>
            <person name="Poulain J."/>
            <person name="Poussereau N."/>
            <person name="Quesneville H."/>
            <person name="Rascle C."/>
            <person name="Schumacher J."/>
            <person name="Segurens B."/>
            <person name="Sexton A."/>
            <person name="Silva E."/>
            <person name="Sirven C."/>
            <person name="Soanes D.M."/>
            <person name="Talbot N.J."/>
            <person name="Templeton M."/>
            <person name="Yandava C."/>
            <person name="Yarden O."/>
            <person name="Zeng Q."/>
            <person name="Rollins J.A."/>
            <person name="Lebrun M.-H."/>
            <person name="Dickman M."/>
        </authorList>
    </citation>
    <scope>NUCLEOTIDE SEQUENCE [LARGE SCALE GENOMIC DNA]</scope>
    <source>
        <strain>ATCC 18683 / 1980 / Ss-1</strain>
    </source>
</reference>
<name>EIF3K_SCLS1</name>
<sequence length="245" mass="27444">MGVPFDYAPERPEHIDAILNGLDRYNPETTNIFQEYVTLQCEEKTYDCYANLALLKLYQFNPHLTKDETITNILVKSLTVFPSPDFSLALHLLPPHILTPISSSSALPAAGDAPLSEAVQKLAVLNTLLSSANYSQFWSTLDSDDLYADLIADVSGFEELIRIRIASTISQSVREIPSSELENWLGMNGEAFEKFIKEVCGWTIENGSVIVPLNKENEAKGTVVRENVKMEQFSRVIRRAYEQPA</sequence>
<protein>
    <recommendedName>
        <fullName evidence="1">Eukaryotic translation initiation factor 3 subunit K</fullName>
        <shortName evidence="1">eIF3k</shortName>
    </recommendedName>
    <alternativeName>
        <fullName evidence="1">eIF-3 p25</fullName>
    </alternativeName>
</protein>
<feature type="chain" id="PRO_0000366909" description="Eukaryotic translation initiation factor 3 subunit K">
    <location>
        <begin position="1"/>
        <end position="245"/>
    </location>
</feature>
<feature type="domain" description="PCI" evidence="2">
    <location>
        <begin position="46"/>
        <end position="227"/>
    </location>
</feature>
<evidence type="ECO:0000255" key="1">
    <source>
        <dbReference type="HAMAP-Rule" id="MF_03010"/>
    </source>
</evidence>
<evidence type="ECO:0000255" key="2">
    <source>
        <dbReference type="PROSITE-ProRule" id="PRU01185"/>
    </source>
</evidence>